<keyword id="KW-0378">Hydrolase</keyword>
<keyword id="KW-0408">Iron</keyword>
<keyword id="KW-0479">Metal-binding</keyword>
<keyword id="KW-0648">Protein biosynthesis</keyword>
<keyword id="KW-1185">Reference proteome</keyword>
<proteinExistence type="inferred from homology"/>
<organism>
    <name type="scientific">Streptomyces avermitilis (strain ATCC 31267 / DSM 46492 / JCM 5070 / NBRC 14893 / NCIMB 12804 / NRRL 8165 / MA-4680)</name>
    <dbReference type="NCBI Taxonomy" id="227882"/>
    <lineage>
        <taxon>Bacteria</taxon>
        <taxon>Bacillati</taxon>
        <taxon>Actinomycetota</taxon>
        <taxon>Actinomycetes</taxon>
        <taxon>Kitasatosporales</taxon>
        <taxon>Streptomycetaceae</taxon>
        <taxon>Streptomyces</taxon>
    </lineage>
</organism>
<sequence>MRHGSIPGTRGHVRPLALLGDPVLHAPCEEVTDHGPELARLVEDMFATMYAANGVGLAANQIGVPLRVFVYDCPDDEDVRHVGHVVNPRLIEADGVVLRGPEGCLSLPGLEAGTERYDRAVVEGFTTDGEPVRVLGTGWFARCLQHECDHLDGGVYVDRVSGWRHRRVMRQAARAPWNRQRAPEPR</sequence>
<accession>Q826Q0</accession>
<protein>
    <recommendedName>
        <fullName evidence="1">Peptide deformylase 2</fullName>
        <shortName evidence="1">PDF 2</shortName>
        <ecNumber evidence="1">3.5.1.88</ecNumber>
    </recommendedName>
    <alternativeName>
        <fullName evidence="1">Polypeptide deformylase 2</fullName>
    </alternativeName>
</protein>
<evidence type="ECO:0000255" key="1">
    <source>
        <dbReference type="HAMAP-Rule" id="MF_00163"/>
    </source>
</evidence>
<reference key="1">
    <citation type="journal article" date="2001" name="Proc. Natl. Acad. Sci. U.S.A.">
        <title>Genome sequence of an industrial microorganism Streptomyces avermitilis: deducing the ability of producing secondary metabolites.</title>
        <authorList>
            <person name="Omura S."/>
            <person name="Ikeda H."/>
            <person name="Ishikawa J."/>
            <person name="Hanamoto A."/>
            <person name="Takahashi C."/>
            <person name="Shinose M."/>
            <person name="Takahashi Y."/>
            <person name="Horikawa H."/>
            <person name="Nakazawa H."/>
            <person name="Osonoe T."/>
            <person name="Kikuchi H."/>
            <person name="Shiba T."/>
            <person name="Sakaki Y."/>
            <person name="Hattori M."/>
        </authorList>
    </citation>
    <scope>NUCLEOTIDE SEQUENCE [LARGE SCALE GENOMIC DNA]</scope>
    <source>
        <strain>ATCC 31267 / DSM 46492 / JCM 5070 / NBRC 14893 / NCIMB 12804 / NRRL 8165 / MA-4680</strain>
    </source>
</reference>
<reference key="2">
    <citation type="journal article" date="2003" name="Nat. Biotechnol.">
        <title>Complete genome sequence and comparative analysis of the industrial microorganism Streptomyces avermitilis.</title>
        <authorList>
            <person name="Ikeda H."/>
            <person name="Ishikawa J."/>
            <person name="Hanamoto A."/>
            <person name="Shinose M."/>
            <person name="Kikuchi H."/>
            <person name="Shiba T."/>
            <person name="Sakaki Y."/>
            <person name="Hattori M."/>
            <person name="Omura S."/>
        </authorList>
    </citation>
    <scope>NUCLEOTIDE SEQUENCE [LARGE SCALE GENOMIC DNA]</scope>
    <source>
        <strain>ATCC 31267 / DSM 46492 / JCM 5070 / NBRC 14893 / NCIMB 12804 / NRRL 8165 / MA-4680</strain>
    </source>
</reference>
<name>DEF2_STRAW</name>
<dbReference type="EC" id="3.5.1.88" evidence="1"/>
<dbReference type="EMBL" id="BA000030">
    <property type="protein sequence ID" value="BAC74837.1"/>
    <property type="molecule type" value="Genomic_DNA"/>
</dbReference>
<dbReference type="SMR" id="Q826Q0"/>
<dbReference type="GeneID" id="41544197"/>
<dbReference type="KEGG" id="sma:SAVERM_7126"/>
<dbReference type="eggNOG" id="COG0242">
    <property type="taxonomic scope" value="Bacteria"/>
</dbReference>
<dbReference type="HOGENOM" id="CLU_061901_1_2_11"/>
<dbReference type="OrthoDB" id="9804313at2"/>
<dbReference type="Proteomes" id="UP000000428">
    <property type="component" value="Chromosome"/>
</dbReference>
<dbReference type="GO" id="GO:0046872">
    <property type="term" value="F:metal ion binding"/>
    <property type="evidence" value="ECO:0007669"/>
    <property type="project" value="UniProtKB-KW"/>
</dbReference>
<dbReference type="GO" id="GO:0042586">
    <property type="term" value="F:peptide deformylase activity"/>
    <property type="evidence" value="ECO:0007669"/>
    <property type="project" value="UniProtKB-UniRule"/>
</dbReference>
<dbReference type="GO" id="GO:0043686">
    <property type="term" value="P:co-translational protein modification"/>
    <property type="evidence" value="ECO:0007669"/>
    <property type="project" value="TreeGrafter"/>
</dbReference>
<dbReference type="GO" id="GO:0006412">
    <property type="term" value="P:translation"/>
    <property type="evidence" value="ECO:0007669"/>
    <property type="project" value="UniProtKB-UniRule"/>
</dbReference>
<dbReference type="CDD" id="cd00487">
    <property type="entry name" value="Pep_deformylase"/>
    <property type="match status" value="1"/>
</dbReference>
<dbReference type="FunFam" id="3.90.45.10:FF:000004">
    <property type="entry name" value="Peptide deformylase"/>
    <property type="match status" value="1"/>
</dbReference>
<dbReference type="Gene3D" id="3.90.45.10">
    <property type="entry name" value="Peptide deformylase"/>
    <property type="match status" value="1"/>
</dbReference>
<dbReference type="HAMAP" id="MF_00163">
    <property type="entry name" value="Pep_deformylase"/>
    <property type="match status" value="1"/>
</dbReference>
<dbReference type="InterPro" id="IPR023635">
    <property type="entry name" value="Peptide_deformylase"/>
</dbReference>
<dbReference type="InterPro" id="IPR036821">
    <property type="entry name" value="Peptide_deformylase_sf"/>
</dbReference>
<dbReference type="NCBIfam" id="TIGR00079">
    <property type="entry name" value="pept_deformyl"/>
    <property type="match status" value="1"/>
</dbReference>
<dbReference type="NCBIfam" id="NF001159">
    <property type="entry name" value="PRK00150.1-3"/>
    <property type="match status" value="1"/>
</dbReference>
<dbReference type="PANTHER" id="PTHR10458">
    <property type="entry name" value="PEPTIDE DEFORMYLASE"/>
    <property type="match status" value="1"/>
</dbReference>
<dbReference type="PANTHER" id="PTHR10458:SF2">
    <property type="entry name" value="PEPTIDE DEFORMYLASE, MITOCHONDRIAL"/>
    <property type="match status" value="1"/>
</dbReference>
<dbReference type="Pfam" id="PF01327">
    <property type="entry name" value="Pep_deformylase"/>
    <property type="match status" value="1"/>
</dbReference>
<dbReference type="PIRSF" id="PIRSF004749">
    <property type="entry name" value="Pep_def"/>
    <property type="match status" value="1"/>
</dbReference>
<dbReference type="PRINTS" id="PR01576">
    <property type="entry name" value="PDEFORMYLASE"/>
</dbReference>
<dbReference type="SUPFAM" id="SSF56420">
    <property type="entry name" value="Peptide deformylase"/>
    <property type="match status" value="1"/>
</dbReference>
<feature type="chain" id="PRO_0000082850" description="Peptide deformylase 2">
    <location>
        <begin position="1"/>
        <end position="186"/>
    </location>
</feature>
<feature type="active site" evidence="1">
    <location>
        <position position="147"/>
    </location>
</feature>
<feature type="binding site" evidence="1">
    <location>
        <position position="104"/>
    </location>
    <ligand>
        <name>Fe cation</name>
        <dbReference type="ChEBI" id="CHEBI:24875"/>
    </ligand>
</feature>
<feature type="binding site" evidence="1">
    <location>
        <position position="146"/>
    </location>
    <ligand>
        <name>Fe cation</name>
        <dbReference type="ChEBI" id="CHEBI:24875"/>
    </ligand>
</feature>
<feature type="binding site" evidence="1">
    <location>
        <position position="150"/>
    </location>
    <ligand>
        <name>Fe cation</name>
        <dbReference type="ChEBI" id="CHEBI:24875"/>
    </ligand>
</feature>
<gene>
    <name evidence="1" type="primary">def2</name>
    <name type="ordered locus">SAV_7126</name>
</gene>
<comment type="function">
    <text evidence="1">Removes the formyl group from the N-terminal Met of newly synthesized proteins. Requires at least a dipeptide for an efficient rate of reaction. N-terminal L-methionine is a prerequisite for activity but the enzyme has broad specificity at other positions.</text>
</comment>
<comment type="catalytic activity">
    <reaction evidence="1">
        <text>N-terminal N-formyl-L-methionyl-[peptide] + H2O = N-terminal L-methionyl-[peptide] + formate</text>
        <dbReference type="Rhea" id="RHEA:24420"/>
        <dbReference type="Rhea" id="RHEA-COMP:10639"/>
        <dbReference type="Rhea" id="RHEA-COMP:10640"/>
        <dbReference type="ChEBI" id="CHEBI:15377"/>
        <dbReference type="ChEBI" id="CHEBI:15740"/>
        <dbReference type="ChEBI" id="CHEBI:49298"/>
        <dbReference type="ChEBI" id="CHEBI:64731"/>
        <dbReference type="EC" id="3.5.1.88"/>
    </reaction>
</comment>
<comment type="cofactor">
    <cofactor evidence="1">
        <name>Fe(2+)</name>
        <dbReference type="ChEBI" id="CHEBI:29033"/>
    </cofactor>
    <text evidence="1">Binds 1 Fe(2+) ion.</text>
</comment>
<comment type="similarity">
    <text evidence="1">Belongs to the polypeptide deformylase family.</text>
</comment>